<keyword id="KW-0025">Alternative splicing</keyword>
<keyword id="KW-1185">Reference proteome</keyword>
<organism>
    <name type="scientific">Xenopus tropicalis</name>
    <name type="common">Western clawed frog</name>
    <name type="synonym">Silurana tropicalis</name>
    <dbReference type="NCBI Taxonomy" id="8364"/>
    <lineage>
        <taxon>Eukaryota</taxon>
        <taxon>Metazoa</taxon>
        <taxon>Chordata</taxon>
        <taxon>Craniata</taxon>
        <taxon>Vertebrata</taxon>
        <taxon>Euteleostomi</taxon>
        <taxon>Amphibia</taxon>
        <taxon>Batrachia</taxon>
        <taxon>Anura</taxon>
        <taxon>Pipoidea</taxon>
        <taxon>Pipidae</taxon>
        <taxon>Xenopodinae</taxon>
        <taxon>Xenopus</taxon>
        <taxon>Silurana</taxon>
    </lineage>
</organism>
<dbReference type="EMBL" id="CR760614">
    <property type="protein sequence ID" value="CAL49305.1"/>
    <property type="molecule type" value="mRNA"/>
</dbReference>
<dbReference type="EMBL" id="BC082737">
    <property type="protein sequence ID" value="AAH82737.1"/>
    <property type="status" value="ALT_INIT"/>
    <property type="molecule type" value="mRNA"/>
</dbReference>
<dbReference type="FunCoup" id="Q07G87">
    <property type="interactions" value="377"/>
</dbReference>
<dbReference type="STRING" id="8364.ENSXETP00000013197"/>
<dbReference type="PaxDb" id="8364-ENSXETP00000003229"/>
<dbReference type="KEGG" id="xtr:496431"/>
<dbReference type="CTD" id="109643382"/>
<dbReference type="eggNOG" id="ENOG502RZ46">
    <property type="taxonomic scope" value="Eukaryota"/>
</dbReference>
<dbReference type="InParanoid" id="Q07G87"/>
<dbReference type="OrthoDB" id="10056365at2759"/>
<dbReference type="Proteomes" id="UP000008143">
    <property type="component" value="Chromosome 2"/>
</dbReference>
<dbReference type="InterPro" id="IPR027850">
    <property type="entry name" value="DUF4504"/>
</dbReference>
<dbReference type="PANTHER" id="PTHR31366">
    <property type="entry name" value="UPF0739 PROTEIN C1ORF74"/>
    <property type="match status" value="1"/>
</dbReference>
<dbReference type="PANTHER" id="PTHR31366:SF2">
    <property type="entry name" value="UPF0739 PROTEIN C1ORF74"/>
    <property type="match status" value="1"/>
</dbReference>
<dbReference type="Pfam" id="PF14953">
    <property type="entry name" value="DUF4504"/>
    <property type="match status" value="1"/>
</dbReference>
<feature type="chain" id="PRO_0000271098" description="UPF0739 protein C1orf74 homolog">
    <location>
        <begin position="1"/>
        <end position="263"/>
    </location>
</feature>
<feature type="splice variant" id="VSP_022278" description="In isoform 2." evidence="1">
    <original>VSLPSVAL</original>
    <variation>AQVCCVY</variation>
    <location>
        <begin position="256"/>
        <end position="263"/>
    </location>
</feature>
<feature type="sequence conflict" description="In Ref. 2; AAH82737." evidence="2" ref="2">
    <original>Y</original>
    <variation>H</variation>
    <location>
        <position position="15"/>
    </location>
</feature>
<feature type="sequence conflict" description="In Ref. 2; AAH82737." evidence="2" ref="2">
    <original>I</original>
    <variation>V</variation>
    <location>
        <position position="80"/>
    </location>
</feature>
<feature type="sequence conflict" description="In Ref. 2; AAH82737." evidence="2" ref="2">
    <original>A</original>
    <variation>T</variation>
    <location>
        <position position="148"/>
    </location>
</feature>
<feature type="sequence conflict" description="In Ref. 2; AAH82737." evidence="2" ref="2">
    <original>F</original>
    <variation>L</variation>
    <location>
        <position position="169"/>
    </location>
</feature>
<protein>
    <recommendedName>
        <fullName>UPF0739 protein C1orf74 homolog</fullName>
    </recommendedName>
</protein>
<sequence length="263" mass="29604">MASSLHKHLLSAARYHLKETKRMSMMVALNLAAEILAVDCGLKPCFLYDYTTSGVQQICSYLKELQNLGLIVGHLHILNIEETILIINVTKAVSYLETLLHSQDLHLIDVSNYLSQPELVSSNQVPQIHAQLAELLGHIKPYQSGQPASVSVGGIQSPEWNLCTMFGFFLQFPSTYWFDTQKGFENCLSFTPLRLFTVQANCSRIGHQSVQIYSFTVPECVYQATQVHLEDWSKSLKQAFNEQNYFTDLEIITNTVSLPSVAL</sequence>
<name>CA074_XENTR</name>
<reference key="1">
    <citation type="submission" date="2006-10" db="EMBL/GenBank/DDBJ databases">
        <authorList>
            <consortium name="Sanger Xenopus tropicalis EST/cDNA project"/>
        </authorList>
    </citation>
    <scope>NUCLEOTIDE SEQUENCE [LARGE SCALE MRNA] (ISOFORM 1)</scope>
    <source>
        <tissue>Egg</tissue>
    </source>
</reference>
<reference key="2">
    <citation type="submission" date="2004-09" db="EMBL/GenBank/DDBJ databases">
        <authorList>
            <consortium name="NIH - Xenopus Gene Collection (XGC) project"/>
        </authorList>
    </citation>
    <scope>NUCLEOTIDE SEQUENCE [LARGE SCALE MRNA] (ISOFORM 2)</scope>
    <source>
        <tissue>Embryo</tissue>
    </source>
</reference>
<evidence type="ECO:0000303" key="1">
    <source ref="2"/>
</evidence>
<evidence type="ECO:0000305" key="2"/>
<gene>
    <name type="ORF">TEgg073c16.1</name>
</gene>
<proteinExistence type="evidence at transcript level"/>
<comment type="alternative products">
    <event type="alternative splicing"/>
    <isoform>
        <id>Q07G87-1</id>
        <name>1</name>
        <sequence type="displayed"/>
    </isoform>
    <isoform>
        <id>Q07G87-2</id>
        <name>2</name>
        <sequence type="described" ref="VSP_022278"/>
    </isoform>
</comment>
<comment type="similarity">
    <text evidence="2">Belongs to the UPF0739 family.</text>
</comment>
<comment type="sequence caution" evidence="2">
    <conflict type="erroneous initiation">
        <sequence resource="EMBL-CDS" id="AAH82737"/>
    </conflict>
</comment>
<accession>Q07G87</accession>
<accession>Q63ZZ4</accession>